<accession>B7LJT8</accession>
<protein>
    <recommendedName>
        <fullName evidence="1">Cytochrome c-type biogenesis protein CcmE</fullName>
    </recommendedName>
    <alternativeName>
        <fullName evidence="1">Cytochrome c maturation protein E</fullName>
    </alternativeName>
    <alternativeName>
        <fullName evidence="1">Heme chaperone CcmE</fullName>
    </alternativeName>
</protein>
<name>CCME_ESCF3</name>
<comment type="function">
    <text evidence="1">Heme chaperone required for the biogenesis of c-type cytochromes. Transiently binds heme delivered by CcmC and transfers the heme to apo-cytochromes in a process facilitated by CcmF and CcmH.</text>
</comment>
<comment type="subcellular location">
    <subcellularLocation>
        <location evidence="1">Cell inner membrane</location>
        <topology evidence="1">Single-pass type II membrane protein</topology>
        <orientation evidence="1">Periplasmic side</orientation>
    </subcellularLocation>
</comment>
<comment type="similarity">
    <text evidence="1">Belongs to the CcmE/CycJ family.</text>
</comment>
<organism>
    <name type="scientific">Escherichia fergusonii (strain ATCC 35469 / DSM 13698 / CCUG 18766 / IAM 14443 / JCM 21226 / LMG 7866 / NBRC 102419 / NCTC 12128 / CDC 0568-73)</name>
    <dbReference type="NCBI Taxonomy" id="585054"/>
    <lineage>
        <taxon>Bacteria</taxon>
        <taxon>Pseudomonadati</taxon>
        <taxon>Pseudomonadota</taxon>
        <taxon>Gammaproteobacteria</taxon>
        <taxon>Enterobacterales</taxon>
        <taxon>Enterobacteriaceae</taxon>
        <taxon>Escherichia</taxon>
    </lineage>
</organism>
<gene>
    <name evidence="1" type="primary">ccmE</name>
    <name evidence="1" type="synonym">cycJ</name>
    <name type="ordered locus">EFER_2287</name>
</gene>
<sequence length="159" mass="17698">MNIRRKNRLWIACAVLAGLALTIGLVLYALRSNIDLFYTPGEILYGKRETQQMPEVGQRLRVGGMVMPGSVQRDPNSLKVTFTIYDAEGSVDVSYEGILPDLFREGQGVVVQGELEKGNHILAKEVLAKHDENYTPPEVEKAMEANHRRPASVYKDPAS</sequence>
<feature type="chain" id="PRO_1000189024" description="Cytochrome c-type biogenesis protein CcmE">
    <location>
        <begin position="1"/>
        <end position="159"/>
    </location>
</feature>
<feature type="topological domain" description="Cytoplasmic" evidence="1">
    <location>
        <begin position="1"/>
        <end position="8"/>
    </location>
</feature>
<feature type="transmembrane region" description="Helical; Signal-anchor for type II membrane protein" evidence="1">
    <location>
        <begin position="9"/>
        <end position="29"/>
    </location>
</feature>
<feature type="topological domain" description="Periplasmic" evidence="1">
    <location>
        <begin position="30"/>
        <end position="159"/>
    </location>
</feature>
<feature type="region of interest" description="Disordered" evidence="2">
    <location>
        <begin position="132"/>
        <end position="159"/>
    </location>
</feature>
<feature type="compositionally biased region" description="Basic and acidic residues" evidence="2">
    <location>
        <begin position="132"/>
        <end position="147"/>
    </location>
</feature>
<feature type="binding site" description="covalent" evidence="1">
    <location>
        <position position="130"/>
    </location>
    <ligand>
        <name>heme</name>
        <dbReference type="ChEBI" id="CHEBI:30413"/>
    </ligand>
</feature>
<feature type="binding site" description="axial binding residue" evidence="1">
    <location>
        <position position="134"/>
    </location>
    <ligand>
        <name>heme</name>
        <dbReference type="ChEBI" id="CHEBI:30413"/>
    </ligand>
    <ligandPart>
        <name>Fe</name>
        <dbReference type="ChEBI" id="CHEBI:18248"/>
    </ligandPart>
</feature>
<keyword id="KW-0997">Cell inner membrane</keyword>
<keyword id="KW-1003">Cell membrane</keyword>
<keyword id="KW-0201">Cytochrome c-type biogenesis</keyword>
<keyword id="KW-0349">Heme</keyword>
<keyword id="KW-0408">Iron</keyword>
<keyword id="KW-0472">Membrane</keyword>
<keyword id="KW-0479">Metal-binding</keyword>
<keyword id="KW-0735">Signal-anchor</keyword>
<keyword id="KW-0812">Transmembrane</keyword>
<keyword id="KW-1133">Transmembrane helix</keyword>
<proteinExistence type="inferred from homology"/>
<dbReference type="EMBL" id="CU928158">
    <property type="protein sequence ID" value="CAQ89788.1"/>
    <property type="molecule type" value="Genomic_DNA"/>
</dbReference>
<dbReference type="RefSeq" id="WP_001026418.1">
    <property type="nucleotide sequence ID" value="NC_011740.1"/>
</dbReference>
<dbReference type="SMR" id="B7LJT8"/>
<dbReference type="GeneID" id="86860369"/>
<dbReference type="KEGG" id="efe:EFER_2287"/>
<dbReference type="HOGENOM" id="CLU_079503_1_0_6"/>
<dbReference type="OrthoDB" id="9793584at2"/>
<dbReference type="Proteomes" id="UP000000745">
    <property type="component" value="Chromosome"/>
</dbReference>
<dbReference type="GO" id="GO:0005886">
    <property type="term" value="C:plasma membrane"/>
    <property type="evidence" value="ECO:0007669"/>
    <property type="project" value="UniProtKB-SubCell"/>
</dbReference>
<dbReference type="GO" id="GO:0020037">
    <property type="term" value="F:heme binding"/>
    <property type="evidence" value="ECO:0007669"/>
    <property type="project" value="InterPro"/>
</dbReference>
<dbReference type="GO" id="GO:0046872">
    <property type="term" value="F:metal ion binding"/>
    <property type="evidence" value="ECO:0007669"/>
    <property type="project" value="UniProtKB-KW"/>
</dbReference>
<dbReference type="GO" id="GO:0017004">
    <property type="term" value="P:cytochrome complex assembly"/>
    <property type="evidence" value="ECO:0007669"/>
    <property type="project" value="UniProtKB-KW"/>
</dbReference>
<dbReference type="FunFam" id="2.40.50.140:FF:000104">
    <property type="entry name" value="Cytochrome c-type biogenesis protein CcmE"/>
    <property type="match status" value="1"/>
</dbReference>
<dbReference type="Gene3D" id="2.40.50.140">
    <property type="entry name" value="Nucleic acid-binding proteins"/>
    <property type="match status" value="1"/>
</dbReference>
<dbReference type="HAMAP" id="MF_01959">
    <property type="entry name" value="CcmE"/>
    <property type="match status" value="1"/>
</dbReference>
<dbReference type="InterPro" id="IPR004329">
    <property type="entry name" value="CcmE"/>
</dbReference>
<dbReference type="InterPro" id="IPR036127">
    <property type="entry name" value="CcmE-like_sf"/>
</dbReference>
<dbReference type="InterPro" id="IPR012340">
    <property type="entry name" value="NA-bd_OB-fold"/>
</dbReference>
<dbReference type="NCBIfam" id="NF009635">
    <property type="entry name" value="PRK13150.1"/>
    <property type="match status" value="1"/>
</dbReference>
<dbReference type="NCBIfam" id="NF009638">
    <property type="entry name" value="PRK13165.1"/>
    <property type="match status" value="1"/>
</dbReference>
<dbReference type="NCBIfam" id="NF009727">
    <property type="entry name" value="PRK13254.1-1"/>
    <property type="match status" value="1"/>
</dbReference>
<dbReference type="NCBIfam" id="NF009729">
    <property type="entry name" value="PRK13254.1-3"/>
    <property type="match status" value="1"/>
</dbReference>
<dbReference type="PANTHER" id="PTHR34128">
    <property type="entry name" value="CYTOCHROME C-TYPE BIOGENESIS PROTEIN CCME HOMOLOG, MITOCHONDRIAL"/>
    <property type="match status" value="1"/>
</dbReference>
<dbReference type="PANTHER" id="PTHR34128:SF2">
    <property type="entry name" value="CYTOCHROME C-TYPE BIOGENESIS PROTEIN CCME HOMOLOG, MITOCHONDRIAL"/>
    <property type="match status" value="1"/>
</dbReference>
<dbReference type="Pfam" id="PF03100">
    <property type="entry name" value="CcmE"/>
    <property type="match status" value="1"/>
</dbReference>
<dbReference type="SUPFAM" id="SSF82093">
    <property type="entry name" value="Heme chaperone CcmE"/>
    <property type="match status" value="1"/>
</dbReference>
<reference key="1">
    <citation type="journal article" date="2009" name="PLoS Genet.">
        <title>Organised genome dynamics in the Escherichia coli species results in highly diverse adaptive paths.</title>
        <authorList>
            <person name="Touchon M."/>
            <person name="Hoede C."/>
            <person name="Tenaillon O."/>
            <person name="Barbe V."/>
            <person name="Baeriswyl S."/>
            <person name="Bidet P."/>
            <person name="Bingen E."/>
            <person name="Bonacorsi S."/>
            <person name="Bouchier C."/>
            <person name="Bouvet O."/>
            <person name="Calteau A."/>
            <person name="Chiapello H."/>
            <person name="Clermont O."/>
            <person name="Cruveiller S."/>
            <person name="Danchin A."/>
            <person name="Diard M."/>
            <person name="Dossat C."/>
            <person name="Karoui M.E."/>
            <person name="Frapy E."/>
            <person name="Garry L."/>
            <person name="Ghigo J.M."/>
            <person name="Gilles A.M."/>
            <person name="Johnson J."/>
            <person name="Le Bouguenec C."/>
            <person name="Lescat M."/>
            <person name="Mangenot S."/>
            <person name="Martinez-Jehanne V."/>
            <person name="Matic I."/>
            <person name="Nassif X."/>
            <person name="Oztas S."/>
            <person name="Petit M.A."/>
            <person name="Pichon C."/>
            <person name="Rouy Z."/>
            <person name="Ruf C.S."/>
            <person name="Schneider D."/>
            <person name="Tourret J."/>
            <person name="Vacherie B."/>
            <person name="Vallenet D."/>
            <person name="Medigue C."/>
            <person name="Rocha E.P.C."/>
            <person name="Denamur E."/>
        </authorList>
    </citation>
    <scope>NUCLEOTIDE SEQUENCE [LARGE SCALE GENOMIC DNA]</scope>
    <source>
        <strain>ATCC 35469 / DSM 13698 / BCRC 15582 / CCUG 18766 / IAM 14443 / JCM 21226 / LMG 7866 / NBRC 102419 / NCTC 12128 / CDC 0568-73</strain>
    </source>
</reference>
<evidence type="ECO:0000255" key="1">
    <source>
        <dbReference type="HAMAP-Rule" id="MF_01959"/>
    </source>
</evidence>
<evidence type="ECO:0000256" key="2">
    <source>
        <dbReference type="SAM" id="MobiDB-lite"/>
    </source>
</evidence>